<gene>
    <name evidence="1" type="primary">aroD</name>
    <name type="ordered locus">DehaBAV1_0443</name>
</gene>
<comment type="function">
    <text evidence="1">Involved in the third step of the chorismate pathway, which leads to the biosynthesis of aromatic amino acids. Catalyzes the cis-dehydration of 3-dehydroquinate (DHQ) and introduces the first double bond of the aromatic ring to yield 3-dehydroshikimate.</text>
</comment>
<comment type="catalytic activity">
    <reaction evidence="1">
        <text>3-dehydroquinate = 3-dehydroshikimate + H2O</text>
        <dbReference type="Rhea" id="RHEA:21096"/>
        <dbReference type="ChEBI" id="CHEBI:15377"/>
        <dbReference type="ChEBI" id="CHEBI:16630"/>
        <dbReference type="ChEBI" id="CHEBI:32364"/>
        <dbReference type="EC" id="4.2.1.10"/>
    </reaction>
</comment>
<comment type="pathway">
    <text evidence="1">Metabolic intermediate biosynthesis; chorismate biosynthesis; chorismate from D-erythrose 4-phosphate and phosphoenolpyruvate: step 3/7.</text>
</comment>
<comment type="subunit">
    <text evidence="1">Homodimer.</text>
</comment>
<comment type="similarity">
    <text evidence="1">Belongs to the type-I 3-dehydroquinase family.</text>
</comment>
<feature type="chain" id="PRO_1000078045" description="3-dehydroquinate dehydratase">
    <location>
        <begin position="1"/>
        <end position="222"/>
    </location>
</feature>
<feature type="active site" description="Proton donor/acceptor" evidence="1">
    <location>
        <position position="112"/>
    </location>
</feature>
<feature type="active site" description="Schiff-base intermediate with substrate" evidence="1">
    <location>
        <position position="139"/>
    </location>
</feature>
<feature type="binding site" evidence="1">
    <location>
        <begin position="29"/>
        <end position="31"/>
    </location>
    <ligand>
        <name>3-dehydroquinate</name>
        <dbReference type="ChEBI" id="CHEBI:32364"/>
    </ligand>
</feature>
<feature type="binding site" evidence="1">
    <location>
        <position position="55"/>
    </location>
    <ligand>
        <name>3-dehydroquinate</name>
        <dbReference type="ChEBI" id="CHEBI:32364"/>
    </ligand>
</feature>
<feature type="binding site" evidence="1">
    <location>
        <position position="178"/>
    </location>
    <ligand>
        <name>3-dehydroquinate</name>
        <dbReference type="ChEBI" id="CHEBI:32364"/>
    </ligand>
</feature>
<feature type="binding site" evidence="1">
    <location>
        <position position="199"/>
    </location>
    <ligand>
        <name>3-dehydroquinate</name>
        <dbReference type="ChEBI" id="CHEBI:32364"/>
    </ligand>
</feature>
<feature type="binding site" evidence="1">
    <location>
        <position position="203"/>
    </location>
    <ligand>
        <name>3-dehydroquinate</name>
        <dbReference type="ChEBI" id="CHEBI:32364"/>
    </ligand>
</feature>
<organism>
    <name type="scientific">Dehalococcoides mccartyi (strain ATCC BAA-2100 / JCM 16839 / KCTC 5957 / BAV1)</name>
    <dbReference type="NCBI Taxonomy" id="216389"/>
    <lineage>
        <taxon>Bacteria</taxon>
        <taxon>Bacillati</taxon>
        <taxon>Chloroflexota</taxon>
        <taxon>Dehalococcoidia</taxon>
        <taxon>Dehalococcoidales</taxon>
        <taxon>Dehalococcoidaceae</taxon>
        <taxon>Dehalococcoides</taxon>
    </lineage>
</organism>
<accession>A5FRZ6</accession>
<protein>
    <recommendedName>
        <fullName evidence="1">3-dehydroquinate dehydratase</fullName>
        <shortName evidence="1">3-dehydroquinase</shortName>
        <ecNumber evidence="1">4.2.1.10</ecNumber>
    </recommendedName>
    <alternativeName>
        <fullName evidence="1">Type I DHQase</fullName>
    </alternativeName>
    <alternativeName>
        <fullName evidence="1">Type I dehydroquinase</fullName>
        <shortName evidence="1">DHQ1</shortName>
    </alternativeName>
</protein>
<dbReference type="EC" id="4.2.1.10" evidence="1"/>
<dbReference type="EMBL" id="CP000688">
    <property type="protein sequence ID" value="ABQ17028.1"/>
    <property type="molecule type" value="Genomic_DNA"/>
</dbReference>
<dbReference type="SMR" id="A5FRZ6"/>
<dbReference type="KEGG" id="deb:DehaBAV1_0443"/>
<dbReference type="PATRIC" id="fig|216389.18.peg.486"/>
<dbReference type="HOGENOM" id="CLU_064444_2_1_0"/>
<dbReference type="UniPathway" id="UPA00053">
    <property type="reaction ID" value="UER00086"/>
</dbReference>
<dbReference type="GO" id="GO:0003855">
    <property type="term" value="F:3-dehydroquinate dehydratase activity"/>
    <property type="evidence" value="ECO:0007669"/>
    <property type="project" value="UniProtKB-UniRule"/>
</dbReference>
<dbReference type="GO" id="GO:0046279">
    <property type="term" value="P:3,4-dihydroxybenzoate biosynthetic process"/>
    <property type="evidence" value="ECO:0007669"/>
    <property type="project" value="UniProtKB-ARBA"/>
</dbReference>
<dbReference type="GO" id="GO:0008652">
    <property type="term" value="P:amino acid biosynthetic process"/>
    <property type="evidence" value="ECO:0007669"/>
    <property type="project" value="UniProtKB-KW"/>
</dbReference>
<dbReference type="GO" id="GO:0009073">
    <property type="term" value="P:aromatic amino acid family biosynthetic process"/>
    <property type="evidence" value="ECO:0007669"/>
    <property type="project" value="UniProtKB-KW"/>
</dbReference>
<dbReference type="GO" id="GO:0009423">
    <property type="term" value="P:chorismate biosynthetic process"/>
    <property type="evidence" value="ECO:0007669"/>
    <property type="project" value="UniProtKB-UniRule"/>
</dbReference>
<dbReference type="CDD" id="cd00502">
    <property type="entry name" value="DHQase_I"/>
    <property type="match status" value="1"/>
</dbReference>
<dbReference type="Gene3D" id="3.20.20.70">
    <property type="entry name" value="Aldolase class I"/>
    <property type="match status" value="1"/>
</dbReference>
<dbReference type="HAMAP" id="MF_00214">
    <property type="entry name" value="AroD"/>
    <property type="match status" value="1"/>
</dbReference>
<dbReference type="InterPro" id="IPR013785">
    <property type="entry name" value="Aldolase_TIM"/>
</dbReference>
<dbReference type="InterPro" id="IPR001381">
    <property type="entry name" value="DHquinase_I"/>
</dbReference>
<dbReference type="InterPro" id="IPR050146">
    <property type="entry name" value="Type-I_3-dehydroquinase"/>
</dbReference>
<dbReference type="NCBIfam" id="TIGR01093">
    <property type="entry name" value="aroD"/>
    <property type="match status" value="1"/>
</dbReference>
<dbReference type="PANTHER" id="PTHR43699">
    <property type="entry name" value="3-DEHYDROQUINATE DEHYDRATASE"/>
    <property type="match status" value="1"/>
</dbReference>
<dbReference type="PANTHER" id="PTHR43699:SF1">
    <property type="entry name" value="3-DEHYDROQUINATE DEHYDRATASE"/>
    <property type="match status" value="1"/>
</dbReference>
<dbReference type="Pfam" id="PF01487">
    <property type="entry name" value="DHquinase_I"/>
    <property type="match status" value="1"/>
</dbReference>
<dbReference type="SUPFAM" id="SSF51569">
    <property type="entry name" value="Aldolase"/>
    <property type="match status" value="1"/>
</dbReference>
<sequence length="222" mass="24476">MKIPPICCVITQLPQAETLKKSEGAAFYELRLDLLGENWRETAVLLNKPFMATCRRSAEGGSFKGNEAERINRLEKAASAGAFMLDIEYSTPNLEEVLGRLRPQAKCLLSHHNFTDTPSAAKLKTLLKDMLTHQADIYKVITTATSINDNINLLNLTKEIPDKKIVAFAMGEPGILSRILCPLAGSPFTYASLNDGNKSASGQMTLAQMIEIYRSVNYANHT</sequence>
<keyword id="KW-0028">Amino-acid biosynthesis</keyword>
<keyword id="KW-0057">Aromatic amino acid biosynthesis</keyword>
<keyword id="KW-0456">Lyase</keyword>
<keyword id="KW-0704">Schiff base</keyword>
<reference key="1">
    <citation type="submission" date="2007-05" db="EMBL/GenBank/DDBJ databases">
        <title>Complete sequence of Dehalococcoides sp. BAV1.</title>
        <authorList>
            <consortium name="US DOE Joint Genome Institute"/>
            <person name="Copeland A."/>
            <person name="Lucas S."/>
            <person name="Lapidus A."/>
            <person name="Barry K."/>
            <person name="Detter J.C."/>
            <person name="Glavina del Rio T."/>
            <person name="Hammon N."/>
            <person name="Israni S."/>
            <person name="Pitluck S."/>
            <person name="Lowry S."/>
            <person name="Clum A."/>
            <person name="Schmutz J."/>
            <person name="Larimer F."/>
            <person name="Land M."/>
            <person name="Hauser L."/>
            <person name="Kyrpides N."/>
            <person name="Kim E."/>
            <person name="Ritalahti K.M."/>
            <person name="Loeffler F."/>
            <person name="Richardson P."/>
        </authorList>
    </citation>
    <scope>NUCLEOTIDE SEQUENCE [LARGE SCALE GENOMIC DNA]</scope>
    <source>
        <strain>ATCC BAA-2100 / JCM 16839 / KCTC 5957 / BAV1</strain>
    </source>
</reference>
<evidence type="ECO:0000255" key="1">
    <source>
        <dbReference type="HAMAP-Rule" id="MF_00214"/>
    </source>
</evidence>
<name>AROD_DEHMB</name>
<proteinExistence type="inferred from homology"/>